<feature type="chain" id="PRO_1000140765" description="Small ribosomal subunit protein uS4">
    <location>
        <begin position="1"/>
        <end position="202"/>
    </location>
</feature>
<feature type="domain" description="S4 RNA-binding" evidence="1">
    <location>
        <begin position="90"/>
        <end position="152"/>
    </location>
</feature>
<feature type="region of interest" description="Disordered" evidence="2">
    <location>
        <begin position="22"/>
        <end position="43"/>
    </location>
</feature>
<comment type="function">
    <text evidence="1">One of the primary rRNA binding proteins, it binds directly to 16S rRNA where it nucleates assembly of the body of the 30S subunit.</text>
</comment>
<comment type="function">
    <text evidence="1">With S5 and S12 plays an important role in translational accuracy.</text>
</comment>
<comment type="subunit">
    <text evidence="1">Part of the 30S ribosomal subunit. Contacts protein S5. The interaction surface between S4 and S5 is involved in control of translational fidelity.</text>
</comment>
<comment type="similarity">
    <text evidence="1">Belongs to the universal ribosomal protein uS4 family.</text>
</comment>
<organism>
    <name type="scientific">Nostoc punctiforme (strain ATCC 29133 / PCC 73102)</name>
    <dbReference type="NCBI Taxonomy" id="63737"/>
    <lineage>
        <taxon>Bacteria</taxon>
        <taxon>Bacillati</taxon>
        <taxon>Cyanobacteriota</taxon>
        <taxon>Cyanophyceae</taxon>
        <taxon>Nostocales</taxon>
        <taxon>Nostocaceae</taxon>
        <taxon>Nostoc</taxon>
    </lineage>
</organism>
<evidence type="ECO:0000255" key="1">
    <source>
        <dbReference type="HAMAP-Rule" id="MF_01306"/>
    </source>
</evidence>
<evidence type="ECO:0000256" key="2">
    <source>
        <dbReference type="SAM" id="MobiDB-lite"/>
    </source>
</evidence>
<evidence type="ECO:0000305" key="3"/>
<name>RS4_NOSP7</name>
<accession>B2J1M8</accession>
<protein>
    <recommendedName>
        <fullName evidence="1">Small ribosomal subunit protein uS4</fullName>
    </recommendedName>
    <alternativeName>
        <fullName evidence="3">30S ribosomal protein S4</fullName>
    </alternativeName>
</protein>
<proteinExistence type="inferred from homology"/>
<gene>
    <name evidence="1" type="primary">rpsD</name>
    <name evidence="1" type="synonym">rps4</name>
    <name type="ordered locus">Npun_R1720</name>
</gene>
<dbReference type="EMBL" id="CP001037">
    <property type="protein sequence ID" value="ACC80389.1"/>
    <property type="molecule type" value="Genomic_DNA"/>
</dbReference>
<dbReference type="RefSeq" id="WP_012408407.1">
    <property type="nucleotide sequence ID" value="NC_010628.1"/>
</dbReference>
<dbReference type="SMR" id="B2J1M8"/>
<dbReference type="STRING" id="63737.Npun_R1720"/>
<dbReference type="EnsemblBacteria" id="ACC80389">
    <property type="protein sequence ID" value="ACC80389"/>
    <property type="gene ID" value="Npun_R1720"/>
</dbReference>
<dbReference type="KEGG" id="npu:Npun_R1720"/>
<dbReference type="eggNOG" id="COG0522">
    <property type="taxonomic scope" value="Bacteria"/>
</dbReference>
<dbReference type="HOGENOM" id="CLU_092403_0_5_3"/>
<dbReference type="OrthoDB" id="9803672at2"/>
<dbReference type="PhylomeDB" id="B2J1M8"/>
<dbReference type="Proteomes" id="UP000001191">
    <property type="component" value="Chromosome"/>
</dbReference>
<dbReference type="GO" id="GO:0015935">
    <property type="term" value="C:small ribosomal subunit"/>
    <property type="evidence" value="ECO:0007669"/>
    <property type="project" value="InterPro"/>
</dbReference>
<dbReference type="GO" id="GO:0019843">
    <property type="term" value="F:rRNA binding"/>
    <property type="evidence" value="ECO:0007669"/>
    <property type="project" value="UniProtKB-UniRule"/>
</dbReference>
<dbReference type="GO" id="GO:0003735">
    <property type="term" value="F:structural constituent of ribosome"/>
    <property type="evidence" value="ECO:0007669"/>
    <property type="project" value="InterPro"/>
</dbReference>
<dbReference type="GO" id="GO:0042274">
    <property type="term" value="P:ribosomal small subunit biogenesis"/>
    <property type="evidence" value="ECO:0007669"/>
    <property type="project" value="TreeGrafter"/>
</dbReference>
<dbReference type="GO" id="GO:0006412">
    <property type="term" value="P:translation"/>
    <property type="evidence" value="ECO:0007669"/>
    <property type="project" value="UniProtKB-UniRule"/>
</dbReference>
<dbReference type="CDD" id="cd00165">
    <property type="entry name" value="S4"/>
    <property type="match status" value="1"/>
</dbReference>
<dbReference type="FunFam" id="3.10.290.10:FF:000001">
    <property type="entry name" value="30S ribosomal protein S4"/>
    <property type="match status" value="1"/>
</dbReference>
<dbReference type="FunFam" id="1.10.1050.10:FF:000002">
    <property type="entry name" value="30S ribosomal protein S4, chloroplastic"/>
    <property type="match status" value="1"/>
</dbReference>
<dbReference type="Gene3D" id="1.10.1050.10">
    <property type="entry name" value="Ribosomal Protein S4 Delta 41, Chain A, domain 1"/>
    <property type="match status" value="1"/>
</dbReference>
<dbReference type="Gene3D" id="3.10.290.10">
    <property type="entry name" value="RNA-binding S4 domain"/>
    <property type="match status" value="1"/>
</dbReference>
<dbReference type="HAMAP" id="MF_01306_B">
    <property type="entry name" value="Ribosomal_uS4_B"/>
    <property type="match status" value="1"/>
</dbReference>
<dbReference type="InterPro" id="IPR022801">
    <property type="entry name" value="Ribosomal_uS4"/>
</dbReference>
<dbReference type="InterPro" id="IPR005709">
    <property type="entry name" value="Ribosomal_uS4_bac-type"/>
</dbReference>
<dbReference type="InterPro" id="IPR018079">
    <property type="entry name" value="Ribosomal_uS4_CS"/>
</dbReference>
<dbReference type="InterPro" id="IPR001912">
    <property type="entry name" value="Ribosomal_uS4_N"/>
</dbReference>
<dbReference type="InterPro" id="IPR002942">
    <property type="entry name" value="S4_RNA-bd"/>
</dbReference>
<dbReference type="InterPro" id="IPR036986">
    <property type="entry name" value="S4_RNA-bd_sf"/>
</dbReference>
<dbReference type="NCBIfam" id="NF003717">
    <property type="entry name" value="PRK05327.1"/>
    <property type="match status" value="1"/>
</dbReference>
<dbReference type="NCBIfam" id="TIGR01017">
    <property type="entry name" value="rpsD_bact"/>
    <property type="match status" value="1"/>
</dbReference>
<dbReference type="PANTHER" id="PTHR11831">
    <property type="entry name" value="30S 40S RIBOSOMAL PROTEIN"/>
    <property type="match status" value="1"/>
</dbReference>
<dbReference type="PANTHER" id="PTHR11831:SF4">
    <property type="entry name" value="SMALL RIBOSOMAL SUBUNIT PROTEIN US4M"/>
    <property type="match status" value="1"/>
</dbReference>
<dbReference type="Pfam" id="PF00163">
    <property type="entry name" value="Ribosomal_S4"/>
    <property type="match status" value="1"/>
</dbReference>
<dbReference type="Pfam" id="PF01479">
    <property type="entry name" value="S4"/>
    <property type="match status" value="1"/>
</dbReference>
<dbReference type="SMART" id="SM01390">
    <property type="entry name" value="Ribosomal_S4"/>
    <property type="match status" value="1"/>
</dbReference>
<dbReference type="SMART" id="SM00363">
    <property type="entry name" value="S4"/>
    <property type="match status" value="1"/>
</dbReference>
<dbReference type="SUPFAM" id="SSF55174">
    <property type="entry name" value="Alpha-L RNA-binding motif"/>
    <property type="match status" value="1"/>
</dbReference>
<dbReference type="PROSITE" id="PS00632">
    <property type="entry name" value="RIBOSOMAL_S4"/>
    <property type="match status" value="1"/>
</dbReference>
<dbReference type="PROSITE" id="PS50889">
    <property type="entry name" value="S4"/>
    <property type="match status" value="1"/>
</dbReference>
<sequence length="202" mass="23221">MSRYRGPRLRIVRRLGDLPGLTRKSARRAYPPGQHGQNRKKRSEYAIRLEEKQKLRFNYGLTEKQLLRYVRKARRVTGSTGQVLLQLLEMRLDNTVFRLGIAPTIPAARQLVNHGHVTVNGRVVNIASYQCRPGEVIAVRDRAQSRKLVEANLQYPGLANLPSHLEFDKNKLVGKVNSVIEREWVALQVNELLVVEYYSRQA</sequence>
<reference key="1">
    <citation type="journal article" date="2013" name="Plant Physiol.">
        <title>A Nostoc punctiforme Sugar Transporter Necessary to Establish a Cyanobacterium-Plant Symbiosis.</title>
        <authorList>
            <person name="Ekman M."/>
            <person name="Picossi S."/>
            <person name="Campbell E.L."/>
            <person name="Meeks J.C."/>
            <person name="Flores E."/>
        </authorList>
    </citation>
    <scope>NUCLEOTIDE SEQUENCE [LARGE SCALE GENOMIC DNA]</scope>
    <source>
        <strain>ATCC 29133 / PCC 73102</strain>
    </source>
</reference>
<keyword id="KW-1185">Reference proteome</keyword>
<keyword id="KW-0687">Ribonucleoprotein</keyword>
<keyword id="KW-0689">Ribosomal protein</keyword>
<keyword id="KW-0694">RNA-binding</keyword>
<keyword id="KW-0699">rRNA-binding</keyword>